<comment type="function">
    <text evidence="1">Usually encoded in the trnK tRNA gene intron. Probably assists in splicing its own and other chloroplast group II introns.</text>
</comment>
<comment type="subcellular location">
    <subcellularLocation>
        <location>Plastid</location>
        <location>Chloroplast</location>
    </subcellularLocation>
</comment>
<comment type="similarity">
    <text evidence="1">Belongs to the intron maturase 2 family. MatK subfamily.</text>
</comment>
<sequence length="509" mass="61506">MKKYQRYLELDRSQQQNFLYPLIFREYIYGLAPSHDLNRNRYILSENVDYDKNSSLLIVKRLITRIYQQNHLILFDNDSSKNQFWGYNKNLYSQIISEGFAIVMEIPFSRQLSSSLEEAGIVKSFNNLESIHSIFSFFEDKFTYLKFFSDVRIPYPIHLEILVQTXXXXXXXXPLLHLLRLFLYEYCNWTSLITQKKIIFTFSKSNPRFFLFLYNFYVCEHESIFLFLRKKSSHLRLNSFSVFFERIYFYTKLEHLVEVFSKNFSSTLSFFKDPLIHYVRYQGKSIFASKNAPFLMNKWKYYFIYFWQCYFDIWSQPRMIQINELFENSFHFFWGGYLSNVRLNFSVVRSQMLEDSFLIEIVMKKLDTIVPIIPLIRSLAKAKFCNRLGHPISKPVWTDSSDFDIIDRYLRICRNLSHYYNGSSKKSLYRIKYIIRLSCIKTLARKHKRTLRAFLKRLDSEELLEEFFTEEEEILSLIFPRSSATLRRLYRSRIWYLDILFSNDTINVN</sequence>
<protein>
    <recommendedName>
        <fullName evidence="1">Maturase K</fullName>
    </recommendedName>
    <alternativeName>
        <fullName evidence="1">Intron maturase</fullName>
    </alternativeName>
</protein>
<geneLocation type="chloroplast"/>
<gene>
    <name evidence="1" type="primary">matK</name>
</gene>
<reference key="1">
    <citation type="journal article" date="2001" name="Am. J. Bot.">
        <title>The dalbergioid legumes (Fabaceae): delimitation of a pantropical monophyletic clade.</title>
        <authorList>
            <person name="Lavin M."/>
            <person name="Pennington R.T."/>
            <person name="Klitgaard B.B."/>
            <person name="Sprent J.I."/>
            <person name="de Lima H.C."/>
            <person name="Gasson P.E."/>
        </authorList>
    </citation>
    <scope>NUCLEOTIDE SEQUENCE [GENOMIC DNA]</scope>
</reference>
<keyword id="KW-0150">Chloroplast</keyword>
<keyword id="KW-0507">mRNA processing</keyword>
<keyword id="KW-0934">Plastid</keyword>
<keyword id="KW-0694">RNA-binding</keyword>
<keyword id="KW-0819">tRNA processing</keyword>
<dbReference type="EMBL" id="AF203594">
    <property type="protein sequence ID" value="AAF12873.1"/>
    <property type="molecule type" value="Genomic_DNA"/>
</dbReference>
<dbReference type="GO" id="GO:0009507">
    <property type="term" value="C:chloroplast"/>
    <property type="evidence" value="ECO:0007669"/>
    <property type="project" value="UniProtKB-SubCell"/>
</dbReference>
<dbReference type="GO" id="GO:0003723">
    <property type="term" value="F:RNA binding"/>
    <property type="evidence" value="ECO:0007669"/>
    <property type="project" value="UniProtKB-KW"/>
</dbReference>
<dbReference type="GO" id="GO:0006397">
    <property type="term" value="P:mRNA processing"/>
    <property type="evidence" value="ECO:0007669"/>
    <property type="project" value="UniProtKB-KW"/>
</dbReference>
<dbReference type="GO" id="GO:0008380">
    <property type="term" value="P:RNA splicing"/>
    <property type="evidence" value="ECO:0007669"/>
    <property type="project" value="UniProtKB-UniRule"/>
</dbReference>
<dbReference type="GO" id="GO:0008033">
    <property type="term" value="P:tRNA processing"/>
    <property type="evidence" value="ECO:0007669"/>
    <property type="project" value="UniProtKB-KW"/>
</dbReference>
<dbReference type="HAMAP" id="MF_01390">
    <property type="entry name" value="MatK"/>
    <property type="match status" value="1"/>
</dbReference>
<dbReference type="InterPro" id="IPR024937">
    <property type="entry name" value="Domain_X"/>
</dbReference>
<dbReference type="InterPro" id="IPR002866">
    <property type="entry name" value="Maturase_MatK"/>
</dbReference>
<dbReference type="InterPro" id="IPR024942">
    <property type="entry name" value="Maturase_MatK_N"/>
</dbReference>
<dbReference type="PANTHER" id="PTHR34811">
    <property type="entry name" value="MATURASE K"/>
    <property type="match status" value="1"/>
</dbReference>
<dbReference type="PANTHER" id="PTHR34811:SF1">
    <property type="entry name" value="MATURASE K"/>
    <property type="match status" value="1"/>
</dbReference>
<dbReference type="Pfam" id="PF01348">
    <property type="entry name" value="Intron_maturas2"/>
    <property type="match status" value="1"/>
</dbReference>
<dbReference type="Pfam" id="PF01824">
    <property type="entry name" value="MatK_N"/>
    <property type="match status" value="1"/>
</dbReference>
<organism>
    <name type="scientific">Stylosanthes hamata</name>
    <name type="common">Caribbean stylo</name>
    <dbReference type="NCBI Taxonomy" id="37660"/>
    <lineage>
        <taxon>Eukaryota</taxon>
        <taxon>Viridiplantae</taxon>
        <taxon>Streptophyta</taxon>
        <taxon>Embryophyta</taxon>
        <taxon>Tracheophyta</taxon>
        <taxon>Spermatophyta</taxon>
        <taxon>Magnoliopsida</taxon>
        <taxon>eudicotyledons</taxon>
        <taxon>Gunneridae</taxon>
        <taxon>Pentapetalae</taxon>
        <taxon>rosids</taxon>
        <taxon>fabids</taxon>
        <taxon>Fabales</taxon>
        <taxon>Fabaceae</taxon>
        <taxon>Papilionoideae</taxon>
        <taxon>50 kb inversion clade</taxon>
        <taxon>dalbergioids sensu lato</taxon>
        <taxon>Dalbergieae</taxon>
        <taxon>Pterocarpus clade</taxon>
        <taxon>Stylosanthes</taxon>
    </lineage>
</organism>
<feature type="chain" id="PRO_0000143725" description="Maturase K">
    <location>
        <begin position="1"/>
        <end position="509"/>
    </location>
</feature>
<accession>Q9TK08</accession>
<evidence type="ECO:0000255" key="1">
    <source>
        <dbReference type="HAMAP-Rule" id="MF_01390"/>
    </source>
</evidence>
<name>MATK_STYHA</name>
<proteinExistence type="inferred from homology"/>